<comment type="function">
    <text evidence="4">Mediates visceral muscle contractile activity (myotropic activity).</text>
</comment>
<comment type="subcellular location">
    <subcellularLocation>
        <location evidence="4">Secreted</location>
    </subcellularLocation>
</comment>
<comment type="similarity">
    <text evidence="1">Belongs to the periviscerokinin family.</text>
</comment>
<evidence type="ECO:0000255" key="1"/>
<evidence type="ECO:0000269" key="2">
    <source>
    </source>
</evidence>
<evidence type="ECO:0000303" key="3">
    <source>
    </source>
</evidence>
<evidence type="ECO:0000305" key="4"/>
<organism>
    <name type="scientific">Mastotermes darwiniensis</name>
    <name type="common">Giant northern termite</name>
    <dbReference type="NCBI Taxonomy" id="13139"/>
    <lineage>
        <taxon>Eukaryota</taxon>
        <taxon>Metazoa</taxon>
        <taxon>Ecdysozoa</taxon>
        <taxon>Arthropoda</taxon>
        <taxon>Hexapoda</taxon>
        <taxon>Insecta</taxon>
        <taxon>Pterygota</taxon>
        <taxon>Neoptera</taxon>
        <taxon>Polyneoptera</taxon>
        <taxon>Dictyoptera</taxon>
        <taxon>Blattodea</taxon>
        <taxon>Blattoidea</taxon>
        <taxon>Termitoidae</taxon>
        <taxon>Mastotermitidae</taxon>
        <taxon>Mastotermes</taxon>
    </lineage>
</organism>
<sequence length="11" mass="1133">SSSGLISMPRV</sequence>
<proteinExistence type="evidence at protein level"/>
<keyword id="KW-0027">Amidation</keyword>
<keyword id="KW-0903">Direct protein sequencing</keyword>
<keyword id="KW-0527">Neuropeptide</keyword>
<keyword id="KW-0964">Secreted</keyword>
<protein>
    <recommendedName>
        <fullName evidence="3">Periviscerokinin-3</fullName>
        <shortName evidence="3">MasDa-PVK-3</shortName>
    </recommendedName>
</protein>
<name>PVK3_MASDA</name>
<dbReference type="GO" id="GO:0005576">
    <property type="term" value="C:extracellular region"/>
    <property type="evidence" value="ECO:0007669"/>
    <property type="project" value="UniProtKB-SubCell"/>
</dbReference>
<dbReference type="GO" id="GO:0007218">
    <property type="term" value="P:neuropeptide signaling pathway"/>
    <property type="evidence" value="ECO:0007669"/>
    <property type="project" value="UniProtKB-KW"/>
</dbReference>
<dbReference type="InterPro" id="IPR013231">
    <property type="entry name" value="Periviscerokinin"/>
</dbReference>
<dbReference type="Pfam" id="PF08259">
    <property type="entry name" value="Periviscerokin"/>
    <property type="match status" value="1"/>
</dbReference>
<feature type="peptide" id="PRO_0000378842" description="Periviscerokinin-3" evidence="2">
    <location>
        <begin position="1"/>
        <end position="11"/>
    </location>
</feature>
<feature type="modified residue" description="Valine amide" evidence="2">
    <location>
        <position position="11"/>
    </location>
</feature>
<accession>P85680</accession>
<reference evidence="4" key="1">
    <citation type="journal article" date="2009" name="BMC Evol. Biol.">
        <title>A proteomic approach for studying insect phylogeny: CAPA peptides of ancient insect taxa (Dictyoptera, Blattoptera) as a test case.</title>
        <authorList>
            <person name="Roth S."/>
            <person name="Fromm B."/>
            <person name="Gaede G."/>
            <person name="Predel R."/>
        </authorList>
    </citation>
    <scope>PROTEIN SEQUENCE</scope>
    <scope>AMIDATION AT VAL-11</scope>
    <source>
        <tissue evidence="2">Abdominal perisympathetic organs</tissue>
    </source>
</reference>